<comment type="function">
    <text evidence="2">Bifunctional wax ester synthase/diacylglycerol acyltransferase (By similarity). Involved in cuticular wax biosynthesis (By similarity).</text>
</comment>
<comment type="catalytic activity">
    <reaction evidence="2">
        <text>an acyl-CoA + a 1,2-diacyl-sn-glycerol = a triacyl-sn-glycerol + CoA</text>
        <dbReference type="Rhea" id="RHEA:10868"/>
        <dbReference type="ChEBI" id="CHEBI:17815"/>
        <dbReference type="ChEBI" id="CHEBI:57287"/>
        <dbReference type="ChEBI" id="CHEBI:58342"/>
        <dbReference type="ChEBI" id="CHEBI:64615"/>
        <dbReference type="EC" id="2.3.1.20"/>
    </reaction>
</comment>
<comment type="catalytic activity">
    <reaction evidence="2">
        <text>a long chain fatty alcohol + a fatty acyl-CoA = a wax ester + CoA</text>
        <dbReference type="Rhea" id="RHEA:38443"/>
        <dbReference type="ChEBI" id="CHEBI:10036"/>
        <dbReference type="ChEBI" id="CHEBI:17135"/>
        <dbReference type="ChEBI" id="CHEBI:57287"/>
        <dbReference type="ChEBI" id="CHEBI:77636"/>
        <dbReference type="EC" id="2.3.1.75"/>
    </reaction>
</comment>
<comment type="pathway">
    <text evidence="2">Glycerolipid metabolism; triacylglycerol biosynthesis.</text>
</comment>
<comment type="pathway">
    <text evidence="2">Lipid metabolism.</text>
</comment>
<comment type="subcellular location">
    <subcellularLocation>
        <location evidence="1">Cell membrane</location>
        <topology evidence="3">Single-pass membrane protein</topology>
    </subcellularLocation>
    <subcellularLocation>
        <location evidence="2">Endoplasmic reticulum membrane</location>
        <topology evidence="3">Single-pass membrane protein</topology>
    </subcellularLocation>
</comment>
<comment type="alternative products">
    <event type="alternative splicing"/>
    <isoform>
        <id>F4IU14-1</id>
        <name>1</name>
        <sequence type="displayed"/>
    </isoform>
    <isoform>
        <id>F4IU14-2</id>
        <name>2</name>
        <sequence type="described" ref="VSP_061025 VSP_061026 VSP_061027"/>
    </isoform>
</comment>
<comment type="tissue specificity">
    <text evidence="4">Mostly expressed in flowers and siliques.</text>
</comment>
<comment type="similarity">
    <text evidence="6">In the N-terminal section; belongs to the long-chain O-acyltransferase family.</text>
</comment>
<feature type="chain" id="PRO_0000452613" description="Wax ester synthase/diacylglycerol acyltransferase 3">
    <location>
        <begin position="1"/>
        <end position="487"/>
    </location>
</feature>
<feature type="topological domain" description="Cytoplasmic" evidence="6">
    <location>
        <begin position="1"/>
        <end position="193"/>
    </location>
</feature>
<feature type="transmembrane region" description="Helical" evidence="3">
    <location>
        <begin position="194"/>
        <end position="214"/>
    </location>
</feature>
<feature type="topological domain" description="Lumenal" evidence="6">
    <location>
        <begin position="215"/>
        <end position="487"/>
    </location>
</feature>
<feature type="active site" description="Proton acceptor" evidence="3">
    <location>
        <position position="151"/>
    </location>
</feature>
<feature type="splice variant" id="VSP_061025" description="In isoform 2.">
    <original>YTMKKGKDMAKEEQETAAIEPLSPVSQLFVSPSLYCFIIFTLGFQTRCNPSTIVEGVKNTWIKLPRFSSKV</original>
    <variation>FQ</variation>
    <location>
        <begin position="2"/>
        <end position="72"/>
    </location>
</feature>
<feature type="splice variant" id="VSP_061026" description="In isoform 2.">
    <original>KVNDVLLGMTQAG</original>
    <variation>VRIFNIHIGIFFL</variation>
    <location>
        <begin position="263"/>
        <end position="275"/>
    </location>
</feature>
<feature type="splice variant" id="VSP_061027" description="In isoform 2.">
    <location>
        <begin position="276"/>
        <end position="487"/>
    </location>
</feature>
<feature type="sequence conflict" description="In Ref. 3; AAO86847 and 4; AAT69156." evidence="6" ref="3 4">
    <original>Q</original>
    <variation>R</variation>
    <location sequence="F4IU14-2">
        <position position="3"/>
    </location>
</feature>
<sequence length="487" mass="55226">MYTMKKGKDMAKEEQETAAIEPLSPVSQLFVSPSLYCFIIFTLGFQTRCNPSTIVEGVKNTWIKLPRFSSKVEIKKNGKASWVPVSVRVEDHVVVPDLDYSNIENPDQFIEDYTSKLANTPMDMSRPLWELHLLNIKTSNAESLAIGKFHHSLGDGMSLISLLLASSRKTSDPDALPTTAATRKHASSNKKSWWLVGRFWFMIRIIFTTVVELFKYLLTLCFMRDTKTPLMGKTGDAIRSRKVIHRIVSFDDVKLVKNNMDMKVNDVLLGMTQAGLSRYLSRKYDEDMVVEKKKNLEKIRLRGTVFVNLRADTKLEDLANMMAKGSKCRWGNFVGVIIFPLWVRSEDDPLEYVRRAKSTMDIKKLSIESLICYGLIKLTRKILGGKVVETLVRRLFDHTTLTFSNVMGPDEDISFFDHPMSYVAASALGGPQALIIHYVTYVNKIVINLAVDTSVIRDPHLLCDDLVESLDIIKLAAMEKGVHKMEV</sequence>
<reference key="1">
    <citation type="journal article" date="1999" name="Nature">
        <title>Sequence and analysis of chromosome 2 of the plant Arabidopsis thaliana.</title>
        <authorList>
            <person name="Lin X."/>
            <person name="Kaul S."/>
            <person name="Rounsley S.D."/>
            <person name="Shea T.P."/>
            <person name="Benito M.-I."/>
            <person name="Town C.D."/>
            <person name="Fujii C.Y."/>
            <person name="Mason T.M."/>
            <person name="Bowman C.L."/>
            <person name="Barnstead M.E."/>
            <person name="Feldblyum T.V."/>
            <person name="Buell C.R."/>
            <person name="Ketchum K.A."/>
            <person name="Lee J.J."/>
            <person name="Ronning C.M."/>
            <person name="Koo H.L."/>
            <person name="Moffat K.S."/>
            <person name="Cronin L.A."/>
            <person name="Shen M."/>
            <person name="Pai G."/>
            <person name="Van Aken S."/>
            <person name="Umayam L."/>
            <person name="Tallon L.J."/>
            <person name="Gill J.E."/>
            <person name="Adams M.D."/>
            <person name="Carrera A.J."/>
            <person name="Creasy T.H."/>
            <person name="Goodman H.M."/>
            <person name="Somerville C.R."/>
            <person name="Copenhaver G.P."/>
            <person name="Preuss D."/>
            <person name="Nierman W.C."/>
            <person name="White O."/>
            <person name="Eisen J.A."/>
            <person name="Salzberg S.L."/>
            <person name="Fraser C.M."/>
            <person name="Venter J.C."/>
        </authorList>
    </citation>
    <scope>NUCLEOTIDE SEQUENCE [LARGE SCALE GENOMIC DNA]</scope>
    <source>
        <strain>cv. Columbia</strain>
    </source>
</reference>
<reference key="2">
    <citation type="journal article" date="2017" name="Plant J.">
        <title>Araport11: a complete reannotation of the Arabidopsis thaliana reference genome.</title>
        <authorList>
            <person name="Cheng C.Y."/>
            <person name="Krishnakumar V."/>
            <person name="Chan A.P."/>
            <person name="Thibaud-Nissen F."/>
            <person name="Schobel S."/>
            <person name="Town C.D."/>
        </authorList>
    </citation>
    <scope>GENOME REANNOTATION</scope>
    <source>
        <strain>cv. Columbia</strain>
    </source>
</reference>
<reference key="3">
    <citation type="journal article" date="2002" name="Plant Physiol.">
        <title>Cloning and sequencing of cDNAs for hypothetical genes from chromosome 2 of Arabidopsis.</title>
        <authorList>
            <person name="Xiao Y.-L."/>
            <person name="Malik M."/>
            <person name="Whitelaw C.A."/>
            <person name="Town C.D."/>
        </authorList>
    </citation>
    <scope>NUCLEOTIDE SEQUENCE [LARGE SCALE MRNA]</scope>
    <source>
        <strain>cv. Columbia</strain>
    </source>
</reference>
<reference key="4">
    <citation type="submission" date="2004-06" db="EMBL/GenBank/DDBJ databases">
        <authorList>
            <person name="Underwood B.A."/>
            <person name="Xiao Y.-L."/>
            <person name="Moskal W.A. Jr."/>
            <person name="Monaghan E.L."/>
            <person name="Wang W."/>
            <person name="Redman J.C."/>
            <person name="Wu H.C."/>
            <person name="Utterback T."/>
            <person name="Town C.D."/>
        </authorList>
    </citation>
    <scope>NUCLEOTIDE SEQUENCE [LARGE SCALE GENOMIC DNA]</scope>
    <source>
        <strain>cv. Columbia</strain>
    </source>
</reference>
<reference key="5">
    <citation type="submission" date="2006-07" db="EMBL/GenBank/DDBJ databases">
        <title>Large-scale analysis of RIKEN Arabidopsis full-length (RAFL) cDNAs.</title>
        <authorList>
            <person name="Totoki Y."/>
            <person name="Seki M."/>
            <person name="Ishida J."/>
            <person name="Nakajima M."/>
            <person name="Enju A."/>
            <person name="Kamiya A."/>
            <person name="Narusaka M."/>
            <person name="Shin-i T."/>
            <person name="Nakagawa M."/>
            <person name="Sakamoto N."/>
            <person name="Oishi K."/>
            <person name="Kohara Y."/>
            <person name="Kobayashi M."/>
            <person name="Toyoda A."/>
            <person name="Sakaki Y."/>
            <person name="Sakurai T."/>
            <person name="Iida K."/>
            <person name="Akiyama K."/>
            <person name="Satou M."/>
            <person name="Toyoda T."/>
            <person name="Konagaya A."/>
            <person name="Carninci P."/>
            <person name="Kawai J."/>
            <person name="Hayashizaki Y."/>
            <person name="Shinozaki K."/>
        </authorList>
    </citation>
    <scope>NUCLEOTIDE SEQUENCE [LARGE SCALE MRNA] (ISOFORM 2)</scope>
    <source>
        <strain>cv. Columbia</strain>
    </source>
</reference>
<reference key="6">
    <citation type="journal article" date="2008" name="Plant Physiol.">
        <title>Identification of the wax ester synthase/acyl-coenzyme A: diacylglycerol acyltransferase WSD1 required for stem wax ester biosynthesis in Arabidopsis.</title>
        <authorList>
            <person name="Li F."/>
            <person name="Wu X."/>
            <person name="Lam P."/>
            <person name="Bird D."/>
            <person name="Zheng H."/>
            <person name="Samuels A.L."/>
            <person name="Jetter R."/>
            <person name="Kunst L."/>
        </authorList>
    </citation>
    <scope>GENE FAMILY</scope>
    <scope>NOMENCLATURE</scope>
</reference>
<reference key="7">
    <citation type="journal article" date="2013" name="Arabidopsis Book">
        <title>Acyl-lipid metabolism.</title>
        <authorList>
            <person name="Li-Beisson Y."/>
            <person name="Shorrosh B."/>
            <person name="Beisson F."/>
            <person name="Andersson M.X."/>
            <person name="Arondel V."/>
            <person name="Bates P.D."/>
            <person name="Baud S."/>
            <person name="Bird D."/>
            <person name="Debono A."/>
            <person name="Durrett T.P."/>
            <person name="Franke R.B."/>
            <person name="Graham I.A."/>
            <person name="Katayama K."/>
            <person name="Kelly A.A."/>
            <person name="Larson T."/>
            <person name="Markham J.E."/>
            <person name="Miquel M."/>
            <person name="Molina I."/>
            <person name="Nishida I."/>
            <person name="Rowland O."/>
            <person name="Samuels L."/>
            <person name="Schmid K.M."/>
            <person name="Wada H."/>
            <person name="Welti R."/>
            <person name="Xu C."/>
            <person name="Zallot R."/>
            <person name="Ohlrogge J."/>
        </authorList>
    </citation>
    <scope>REVIEW ON ACYL-LIPID METABOLISM</scope>
</reference>
<reference key="8">
    <citation type="journal article" date="2019" name="Plant J.">
        <title>Surface wax esters contribute to drought tolerance in Arabidopsis.</title>
        <authorList>
            <person name="Patwari P."/>
            <person name="Salewski V."/>
            <person name="Gutbrod K."/>
            <person name="Kreszies T."/>
            <person name="Dresen-Scholz B."/>
            <person name="Peisker H."/>
            <person name="Steiner U."/>
            <person name="Meyer A.J."/>
            <person name="Schreiber L."/>
            <person name="Doermann P."/>
        </authorList>
    </citation>
    <scope>TISSUE SPECIFICITY</scope>
    <source>
        <strain>cv. Columbia</strain>
    </source>
</reference>
<name>WSD3_ARATH</name>
<accession>F4IU14</accession>
<accession>Q0WVI1</accession>
<accession>Q84RJ9</accession>
<gene>
    <name evidence="5" type="primary">WSD3</name>
    <name evidence="7" type="ordered locus">At2g38995</name>
    <name type="ORF">T7F6</name>
</gene>
<dbReference type="EC" id="2.3.1.20" evidence="2"/>
<dbReference type="EC" id="2.3.1.75" evidence="2"/>
<dbReference type="EMBL" id="AC005770">
    <property type="status" value="NOT_ANNOTATED_CDS"/>
    <property type="molecule type" value="Genomic_DNA"/>
</dbReference>
<dbReference type="EMBL" id="CP002685">
    <property type="protein sequence ID" value="AEC09622.1"/>
    <property type="molecule type" value="Genomic_DNA"/>
</dbReference>
<dbReference type="EMBL" id="AY231419">
    <property type="protein sequence ID" value="AAO86847.1"/>
    <property type="molecule type" value="mRNA"/>
</dbReference>
<dbReference type="EMBL" id="AY649239">
    <property type="protein sequence ID" value="AAT69156.1"/>
    <property type="molecule type" value="Genomic_DNA"/>
</dbReference>
<dbReference type="EMBL" id="AK226769">
    <property type="protein sequence ID" value="BAE98867.1"/>
    <property type="molecule type" value="mRNA"/>
</dbReference>
<dbReference type="RefSeq" id="NP_001189709.1">
    <molecule id="F4IU14-1"/>
    <property type="nucleotide sequence ID" value="NM_001202780.2"/>
</dbReference>
<dbReference type="SMR" id="F4IU14"/>
<dbReference type="STRING" id="3702.F4IU14"/>
<dbReference type="iPTMnet" id="F4IU14"/>
<dbReference type="PaxDb" id="3702-AT2G38995.1"/>
<dbReference type="ProteomicsDB" id="211899"/>
<dbReference type="EnsemblPlants" id="AT2G38995.2">
    <molecule id="F4IU14-1"/>
    <property type="protein sequence ID" value="AT2G38995.2"/>
    <property type="gene ID" value="AT2G38995"/>
</dbReference>
<dbReference type="GeneID" id="818485"/>
<dbReference type="Gramene" id="AT2G38995.2">
    <molecule id="F4IU14-1"/>
    <property type="protein sequence ID" value="AT2G38995.2"/>
    <property type="gene ID" value="AT2G38995"/>
</dbReference>
<dbReference type="KEGG" id="ath:AT2G38995"/>
<dbReference type="Araport" id="AT2G38995"/>
<dbReference type="TAIR" id="AT2G38995"/>
<dbReference type="eggNOG" id="ENOG502QTZ2">
    <property type="taxonomic scope" value="Eukaryota"/>
</dbReference>
<dbReference type="HOGENOM" id="CLU_027831_0_0_1"/>
<dbReference type="InParanoid" id="F4IU14"/>
<dbReference type="UniPathway" id="UPA00282"/>
<dbReference type="PRO" id="PR:F4IU14"/>
<dbReference type="Proteomes" id="UP000006548">
    <property type="component" value="Chromosome 2"/>
</dbReference>
<dbReference type="ExpressionAtlas" id="F4IU14">
    <property type="expression patterns" value="baseline and differential"/>
</dbReference>
<dbReference type="GO" id="GO:0005789">
    <property type="term" value="C:endoplasmic reticulum membrane"/>
    <property type="evidence" value="ECO:0007669"/>
    <property type="project" value="UniProtKB-SubCell"/>
</dbReference>
<dbReference type="GO" id="GO:0005886">
    <property type="term" value="C:plasma membrane"/>
    <property type="evidence" value="ECO:0007669"/>
    <property type="project" value="UniProtKB-SubCell"/>
</dbReference>
<dbReference type="GO" id="GO:0004144">
    <property type="term" value="F:diacylglycerol O-acyltransferase activity"/>
    <property type="evidence" value="ECO:0007669"/>
    <property type="project" value="UniProtKB-EC"/>
</dbReference>
<dbReference type="GO" id="GO:0047196">
    <property type="term" value="F:long-chain-alcohol O-fatty-acyltransferase activity"/>
    <property type="evidence" value="ECO:0007669"/>
    <property type="project" value="UniProtKB-EC"/>
</dbReference>
<dbReference type="GO" id="GO:0019432">
    <property type="term" value="P:triglyceride biosynthetic process"/>
    <property type="evidence" value="ECO:0007669"/>
    <property type="project" value="UniProtKB-UniPathway"/>
</dbReference>
<dbReference type="Gene3D" id="3.30.559.10">
    <property type="entry name" value="Chloramphenicol acetyltransferase-like domain"/>
    <property type="match status" value="1"/>
</dbReference>
<dbReference type="InterPro" id="IPR023213">
    <property type="entry name" value="CAT-like_dom_sf"/>
</dbReference>
<dbReference type="InterPro" id="IPR045034">
    <property type="entry name" value="O-acyltransferase_WSD1-like"/>
</dbReference>
<dbReference type="InterPro" id="IPR009721">
    <property type="entry name" value="O-acyltransferase_WSD1_C"/>
</dbReference>
<dbReference type="InterPro" id="IPR004255">
    <property type="entry name" value="O-acyltransferase_WSD1_N"/>
</dbReference>
<dbReference type="PANTHER" id="PTHR31650">
    <property type="entry name" value="O-ACYLTRANSFERASE (WSD1-LIKE) FAMILY PROTEIN"/>
    <property type="match status" value="1"/>
</dbReference>
<dbReference type="PANTHER" id="PTHR31650:SF50">
    <property type="entry name" value="WAX ESTER SYNTHASE_DIACYLGLYCEROL ACYLTRANSFERASE 3"/>
    <property type="match status" value="1"/>
</dbReference>
<dbReference type="Pfam" id="PF06974">
    <property type="entry name" value="WS_DGAT_C"/>
    <property type="match status" value="1"/>
</dbReference>
<dbReference type="Pfam" id="PF03007">
    <property type="entry name" value="WS_DGAT_cat"/>
    <property type="match status" value="1"/>
</dbReference>
<dbReference type="SUPFAM" id="SSF52777">
    <property type="entry name" value="CoA-dependent acyltransferases"/>
    <property type="match status" value="1"/>
</dbReference>
<protein>
    <recommendedName>
        <fullName evidence="5">Wax ester synthase/diacylglycerol acyltransferase 3</fullName>
        <shortName evidence="5">WS/DGAT 3</shortName>
    </recommendedName>
    <alternativeName>
        <fullName evidence="5">Diacylglycerol O-acyltransferase WSD3</fullName>
        <ecNumber evidence="2">2.3.1.20</ecNumber>
    </alternativeName>
    <alternativeName>
        <fullName evidence="5">Long-chain-alcohol O-fatty-acyltransferase WSD3</fullName>
        <ecNumber evidence="2">2.3.1.75</ecNumber>
    </alternativeName>
</protein>
<keyword id="KW-0012">Acyltransferase</keyword>
<keyword id="KW-0025">Alternative splicing</keyword>
<keyword id="KW-1003">Cell membrane</keyword>
<keyword id="KW-0256">Endoplasmic reticulum</keyword>
<keyword id="KW-0472">Membrane</keyword>
<keyword id="KW-1185">Reference proteome</keyword>
<keyword id="KW-0808">Transferase</keyword>
<keyword id="KW-0812">Transmembrane</keyword>
<keyword id="KW-1133">Transmembrane helix</keyword>
<proteinExistence type="evidence at transcript level"/>
<organism>
    <name type="scientific">Arabidopsis thaliana</name>
    <name type="common">Mouse-ear cress</name>
    <dbReference type="NCBI Taxonomy" id="3702"/>
    <lineage>
        <taxon>Eukaryota</taxon>
        <taxon>Viridiplantae</taxon>
        <taxon>Streptophyta</taxon>
        <taxon>Embryophyta</taxon>
        <taxon>Tracheophyta</taxon>
        <taxon>Spermatophyta</taxon>
        <taxon>Magnoliopsida</taxon>
        <taxon>eudicotyledons</taxon>
        <taxon>Gunneridae</taxon>
        <taxon>Pentapetalae</taxon>
        <taxon>rosids</taxon>
        <taxon>malvids</taxon>
        <taxon>Brassicales</taxon>
        <taxon>Brassicaceae</taxon>
        <taxon>Camelineae</taxon>
        <taxon>Arabidopsis</taxon>
    </lineage>
</organism>
<evidence type="ECO:0000250" key="1">
    <source>
        <dbReference type="UniProtKB" id="Q5KS41"/>
    </source>
</evidence>
<evidence type="ECO:0000250" key="2">
    <source>
        <dbReference type="UniProtKB" id="Q93ZR6"/>
    </source>
</evidence>
<evidence type="ECO:0000255" key="3"/>
<evidence type="ECO:0000269" key="4">
    <source>
    </source>
</evidence>
<evidence type="ECO:0000303" key="5">
    <source>
    </source>
</evidence>
<evidence type="ECO:0000305" key="6"/>
<evidence type="ECO:0000312" key="7">
    <source>
        <dbReference type="Araport" id="AT2G38995"/>
    </source>
</evidence>